<proteinExistence type="inferred from homology"/>
<comment type="function">
    <text evidence="1">This protein is involved in the repair of mismatches in DNA. It is possible that it carries out the mismatch recognition step. This protein has a weak ATPase activity.</text>
</comment>
<comment type="similarity">
    <text evidence="1">Belongs to the DNA mismatch repair MutS family.</text>
</comment>
<gene>
    <name evidence="1" type="primary">mutS</name>
    <name type="ordered locus">Bcep1808_2168</name>
</gene>
<evidence type="ECO:0000255" key="1">
    <source>
        <dbReference type="HAMAP-Rule" id="MF_00096"/>
    </source>
</evidence>
<evidence type="ECO:0000256" key="2">
    <source>
        <dbReference type="SAM" id="MobiDB-lite"/>
    </source>
</evidence>
<feature type="chain" id="PRO_0000335131" description="DNA mismatch repair protein MutS">
    <location>
        <begin position="1"/>
        <end position="886"/>
    </location>
</feature>
<feature type="region of interest" description="Disordered" evidence="2">
    <location>
        <begin position="834"/>
        <end position="857"/>
    </location>
</feature>
<feature type="binding site" evidence="1">
    <location>
        <begin position="627"/>
        <end position="634"/>
    </location>
    <ligand>
        <name>ATP</name>
        <dbReference type="ChEBI" id="CHEBI:30616"/>
    </ligand>
</feature>
<keyword id="KW-0067">ATP-binding</keyword>
<keyword id="KW-0227">DNA damage</keyword>
<keyword id="KW-0234">DNA repair</keyword>
<keyword id="KW-0238">DNA-binding</keyword>
<keyword id="KW-0547">Nucleotide-binding</keyword>
<accession>A4JFW7</accession>
<name>MUTS_BURVG</name>
<protein>
    <recommendedName>
        <fullName evidence="1">DNA mismatch repair protein MutS</fullName>
    </recommendedName>
</protein>
<organism>
    <name type="scientific">Burkholderia vietnamiensis (strain G4 / LMG 22486)</name>
    <name type="common">Burkholderia cepacia (strain R1808)</name>
    <dbReference type="NCBI Taxonomy" id="269482"/>
    <lineage>
        <taxon>Bacteria</taxon>
        <taxon>Pseudomonadati</taxon>
        <taxon>Pseudomonadota</taxon>
        <taxon>Betaproteobacteria</taxon>
        <taxon>Burkholderiales</taxon>
        <taxon>Burkholderiaceae</taxon>
        <taxon>Burkholderia</taxon>
        <taxon>Burkholderia cepacia complex</taxon>
    </lineage>
</organism>
<reference key="1">
    <citation type="submission" date="2007-03" db="EMBL/GenBank/DDBJ databases">
        <title>Complete sequence of chromosome 1 of Burkholderia vietnamiensis G4.</title>
        <authorList>
            <consortium name="US DOE Joint Genome Institute"/>
            <person name="Copeland A."/>
            <person name="Lucas S."/>
            <person name="Lapidus A."/>
            <person name="Barry K."/>
            <person name="Detter J.C."/>
            <person name="Glavina del Rio T."/>
            <person name="Hammon N."/>
            <person name="Israni S."/>
            <person name="Dalin E."/>
            <person name="Tice H."/>
            <person name="Pitluck S."/>
            <person name="Chain P."/>
            <person name="Malfatti S."/>
            <person name="Shin M."/>
            <person name="Vergez L."/>
            <person name="Schmutz J."/>
            <person name="Larimer F."/>
            <person name="Land M."/>
            <person name="Hauser L."/>
            <person name="Kyrpides N."/>
            <person name="Tiedje J."/>
            <person name="Richardson P."/>
        </authorList>
    </citation>
    <scope>NUCLEOTIDE SEQUENCE [LARGE SCALE GENOMIC DNA]</scope>
    <source>
        <strain>G4 / LMG 22486</strain>
    </source>
</reference>
<sequence length="886" mass="95964">MDLSDSPKGIETHTPMMQQYLRIKADHPDTLVFYRMGDFYELFFEDAEKAARLLDLTLTQRGASAGNPIKMAGVPHHAVEQYLAKLVKMGESVAICEQIGDPATSKGPVERKVVRVVTPGTLTDAALLSDKNDVYLLAMYTGHNKRGVAVNIGLAWLNLASGALRLAEIEPDQLGAALERIRPAEILTADGATDAVPAGAGAVKRVPAWHFDIASGTQRLCDQLDVAGLDGFGAHSLTSACGAAGALLLYAAATQGQQLRHVRSLKVESETEYIGLDPATRRNLELTETLRGTESPTLYSLLDTCCTTMGSRLLRHWLHHPPRASVAAQSRQQAIGALLDAPADANLDALRSALRQIADVERITGRLALLSARPRDLSSLRDTFAALPALRERISAIVANADALARVDAALAPPAECLDLLTSAIAPEPAAMVRDGGVIARGYDAELDELRDISENCGQFLIDLEARERARTGIANLRVEYNKVHGFYIEVTRGQTDKVPDDYRRRQTLKNAERYITPELKTFEDKALSAQERALARERALYDGVLQALLPFIPECQRVASALAELDVLAAFAERARTLDWVAPTFTDDIGIEIEQGRHPVVEAQVEQFIANDCRFGADRKLLLITGPNMGGKSTFMRQTALIALMAYVGSYVPAKSACFGPIDRIFTRIGAADDLAGGRSTFMVEMTEAAAILNDATPQSLVLMDEIGRGTSTFDGLALAWAIARHLLAQNGCYTLFATHYFELTQLPSEFPQAANVHLSAVEHGHGIVFLHAVNEGPANQSYGLQVAQLAGVPAPVIRAARKHLAYLEQQSAAQHTPQLDLFSAPPAAADDVECADAPAPSDATHPALDRLRDIDPDDLKPREALDLLYELRTLVRSHDADGHA</sequence>
<dbReference type="EMBL" id="CP000614">
    <property type="protein sequence ID" value="ABO55170.1"/>
    <property type="molecule type" value="Genomic_DNA"/>
</dbReference>
<dbReference type="SMR" id="A4JFW7"/>
<dbReference type="KEGG" id="bvi:Bcep1808_2168"/>
<dbReference type="eggNOG" id="COG0249">
    <property type="taxonomic scope" value="Bacteria"/>
</dbReference>
<dbReference type="HOGENOM" id="CLU_002472_4_0_4"/>
<dbReference type="Proteomes" id="UP000002287">
    <property type="component" value="Chromosome 1"/>
</dbReference>
<dbReference type="GO" id="GO:0005829">
    <property type="term" value="C:cytosol"/>
    <property type="evidence" value="ECO:0007669"/>
    <property type="project" value="TreeGrafter"/>
</dbReference>
<dbReference type="GO" id="GO:0005524">
    <property type="term" value="F:ATP binding"/>
    <property type="evidence" value="ECO:0007669"/>
    <property type="project" value="UniProtKB-UniRule"/>
</dbReference>
<dbReference type="GO" id="GO:0140664">
    <property type="term" value="F:ATP-dependent DNA damage sensor activity"/>
    <property type="evidence" value="ECO:0007669"/>
    <property type="project" value="InterPro"/>
</dbReference>
<dbReference type="GO" id="GO:0003684">
    <property type="term" value="F:damaged DNA binding"/>
    <property type="evidence" value="ECO:0007669"/>
    <property type="project" value="UniProtKB-UniRule"/>
</dbReference>
<dbReference type="GO" id="GO:0030983">
    <property type="term" value="F:mismatched DNA binding"/>
    <property type="evidence" value="ECO:0007669"/>
    <property type="project" value="InterPro"/>
</dbReference>
<dbReference type="GO" id="GO:0006298">
    <property type="term" value="P:mismatch repair"/>
    <property type="evidence" value="ECO:0007669"/>
    <property type="project" value="UniProtKB-UniRule"/>
</dbReference>
<dbReference type="CDD" id="cd03284">
    <property type="entry name" value="ABC_MutS1"/>
    <property type="match status" value="1"/>
</dbReference>
<dbReference type="FunFam" id="3.40.1170.10:FF:000001">
    <property type="entry name" value="DNA mismatch repair protein MutS"/>
    <property type="match status" value="1"/>
</dbReference>
<dbReference type="FunFam" id="3.40.50.300:FF:000870">
    <property type="entry name" value="MutS protein homolog 4"/>
    <property type="match status" value="1"/>
</dbReference>
<dbReference type="Gene3D" id="1.10.1420.10">
    <property type="match status" value="2"/>
</dbReference>
<dbReference type="Gene3D" id="6.10.140.430">
    <property type="match status" value="1"/>
</dbReference>
<dbReference type="Gene3D" id="3.40.1170.10">
    <property type="entry name" value="DNA repair protein MutS, domain I"/>
    <property type="match status" value="1"/>
</dbReference>
<dbReference type="Gene3D" id="3.30.420.110">
    <property type="entry name" value="MutS, connector domain"/>
    <property type="match status" value="1"/>
</dbReference>
<dbReference type="Gene3D" id="3.40.50.300">
    <property type="entry name" value="P-loop containing nucleotide triphosphate hydrolases"/>
    <property type="match status" value="1"/>
</dbReference>
<dbReference type="HAMAP" id="MF_00096">
    <property type="entry name" value="MutS"/>
    <property type="match status" value="1"/>
</dbReference>
<dbReference type="InterPro" id="IPR005748">
    <property type="entry name" value="DNA_mismatch_repair_MutS"/>
</dbReference>
<dbReference type="InterPro" id="IPR007695">
    <property type="entry name" value="DNA_mismatch_repair_MutS-lik_N"/>
</dbReference>
<dbReference type="InterPro" id="IPR017261">
    <property type="entry name" value="DNA_mismatch_repair_MutS/MSH"/>
</dbReference>
<dbReference type="InterPro" id="IPR000432">
    <property type="entry name" value="DNA_mismatch_repair_MutS_C"/>
</dbReference>
<dbReference type="InterPro" id="IPR007861">
    <property type="entry name" value="DNA_mismatch_repair_MutS_clamp"/>
</dbReference>
<dbReference type="InterPro" id="IPR007696">
    <property type="entry name" value="DNA_mismatch_repair_MutS_core"/>
</dbReference>
<dbReference type="InterPro" id="IPR016151">
    <property type="entry name" value="DNA_mismatch_repair_MutS_N"/>
</dbReference>
<dbReference type="InterPro" id="IPR036187">
    <property type="entry name" value="DNA_mismatch_repair_MutS_sf"/>
</dbReference>
<dbReference type="InterPro" id="IPR007860">
    <property type="entry name" value="DNA_mmatch_repair_MutS_con_dom"/>
</dbReference>
<dbReference type="InterPro" id="IPR045076">
    <property type="entry name" value="MutS"/>
</dbReference>
<dbReference type="InterPro" id="IPR036678">
    <property type="entry name" value="MutS_con_dom_sf"/>
</dbReference>
<dbReference type="InterPro" id="IPR027417">
    <property type="entry name" value="P-loop_NTPase"/>
</dbReference>
<dbReference type="NCBIfam" id="TIGR01070">
    <property type="entry name" value="mutS1"/>
    <property type="match status" value="1"/>
</dbReference>
<dbReference type="NCBIfam" id="NF003810">
    <property type="entry name" value="PRK05399.1"/>
    <property type="match status" value="1"/>
</dbReference>
<dbReference type="PANTHER" id="PTHR11361:SF34">
    <property type="entry name" value="DNA MISMATCH REPAIR PROTEIN MSH1, MITOCHONDRIAL"/>
    <property type="match status" value="1"/>
</dbReference>
<dbReference type="PANTHER" id="PTHR11361">
    <property type="entry name" value="DNA MISMATCH REPAIR PROTEIN MUTS FAMILY MEMBER"/>
    <property type="match status" value="1"/>
</dbReference>
<dbReference type="Pfam" id="PF01624">
    <property type="entry name" value="MutS_I"/>
    <property type="match status" value="1"/>
</dbReference>
<dbReference type="Pfam" id="PF05188">
    <property type="entry name" value="MutS_II"/>
    <property type="match status" value="1"/>
</dbReference>
<dbReference type="Pfam" id="PF05192">
    <property type="entry name" value="MutS_III"/>
    <property type="match status" value="1"/>
</dbReference>
<dbReference type="Pfam" id="PF05190">
    <property type="entry name" value="MutS_IV"/>
    <property type="match status" value="1"/>
</dbReference>
<dbReference type="Pfam" id="PF00488">
    <property type="entry name" value="MutS_V"/>
    <property type="match status" value="1"/>
</dbReference>
<dbReference type="PIRSF" id="PIRSF037677">
    <property type="entry name" value="DNA_mis_repair_Msh6"/>
    <property type="match status" value="1"/>
</dbReference>
<dbReference type="SMART" id="SM00534">
    <property type="entry name" value="MUTSac"/>
    <property type="match status" value="1"/>
</dbReference>
<dbReference type="SMART" id="SM00533">
    <property type="entry name" value="MUTSd"/>
    <property type="match status" value="1"/>
</dbReference>
<dbReference type="SUPFAM" id="SSF55271">
    <property type="entry name" value="DNA repair protein MutS, domain I"/>
    <property type="match status" value="1"/>
</dbReference>
<dbReference type="SUPFAM" id="SSF53150">
    <property type="entry name" value="DNA repair protein MutS, domain II"/>
    <property type="match status" value="1"/>
</dbReference>
<dbReference type="SUPFAM" id="SSF48334">
    <property type="entry name" value="DNA repair protein MutS, domain III"/>
    <property type="match status" value="1"/>
</dbReference>
<dbReference type="SUPFAM" id="SSF52540">
    <property type="entry name" value="P-loop containing nucleoside triphosphate hydrolases"/>
    <property type="match status" value="1"/>
</dbReference>
<dbReference type="PROSITE" id="PS00486">
    <property type="entry name" value="DNA_MISMATCH_REPAIR_2"/>
    <property type="match status" value="1"/>
</dbReference>